<accession>Q29RT0</accession>
<comment type="function">
    <text evidence="1">RNA-binding protein that plays several role in the regulation of pre- and post-transcriptional processes. Implicated in tissue-specific regulation of gene transcription and alternative splicing of several pre-mRNAs. Binds to and stimulates transcription from the tumor suppressor TXNIP gene promoter; may thus be involved in tumor suppression. When associated with SAFB, binds to and stimulates transcription from the SREBF1 promoter. Associates with nascent mRNAs transcribed by RNA polymerase II. Component of the supraspliceosome complex that regulates pre-mRNA alternative splice site selection. Can either activate or suppress exon inclusion; acts additively with TRA2B to promote exon 7 inclusion of the survival motor neuron SMN2. Represses the splicing of MAPT/Tau exon 10. Binds preferentially to single-stranded 5'-CC[A/C]-rich RNA sequence motifs localized in a single-stranded conformation; probably binds RNA as a homodimer. Binds non-specifically to pre-mRNAs. Also plays a role in the cytoplasmic TNFR1 trafficking pathways; promotes both the IL-1-beta-mediated inducible proteolytic cleavage of TNFR1 ectodomains and the release of TNFR1 exosome-like vesicles to the extracellular compartment (By similarity).</text>
</comment>
<comment type="subunit">
    <text evidence="1">Homomultimer. Found in the supraspliceosome complex. Identified in the spliceosome C complex. Forms a complex with ILF2, ILF3, YLPM1, KHDRBS1, NCOA5 and PPP1CA. Interacts with CLK2, KHDRBS2, KHDRBS3, SAFB/SAFB1, TRA2B and YTHDC1. Interacts with ERAP1; the interaction is RNA-independent (By similarity).</text>
</comment>
<comment type="subcellular location">
    <subcellularLocation>
        <location>Nucleus</location>
    </subcellularLocation>
    <text evidence="1">Component of ribonucleosomes. Localizes in numerous small granules in the nucleus (By similarity).</text>
</comment>
<comment type="domain">
    <text evidence="1">The RRM domain is necessary for RNA-binding, but not for splice site selection, indicating that its splicing activity does not require direct binding to RNA.</text>
</comment>
<comment type="PTM">
    <text evidence="1">O-glycosylated.</text>
</comment>
<comment type="PTM">
    <text evidence="1">Arg-185 is dimethylated, probably to asymmetric dimethylarginine.</text>
</comment>
<gene>
    <name type="primary">RBMX</name>
    <name type="synonym">HNRPG</name>
</gene>
<dbReference type="EMBL" id="BC114040">
    <property type="protein sequence ID" value="AAI14041.1"/>
    <property type="molecule type" value="mRNA"/>
</dbReference>
<dbReference type="RefSeq" id="NP_001040075.1">
    <property type="nucleotide sequence ID" value="NM_001046610.1"/>
</dbReference>
<dbReference type="SMR" id="Q29RT0"/>
<dbReference type="FunCoup" id="Q29RT0">
    <property type="interactions" value="46"/>
</dbReference>
<dbReference type="STRING" id="9913.ENSBTAP00000056096"/>
<dbReference type="PaxDb" id="9913-ENSBTAP00000056096"/>
<dbReference type="Ensembl" id="ENSBTAT00000066112.3">
    <property type="protein sequence ID" value="ENSBTAP00000056096.1"/>
    <property type="gene ID" value="ENSBTAG00000047652.3"/>
</dbReference>
<dbReference type="GeneID" id="617969"/>
<dbReference type="KEGG" id="bta:617969"/>
<dbReference type="CTD" id="27288"/>
<dbReference type="VEuPathDB" id="HostDB:ENSBTAG00000047652"/>
<dbReference type="eggNOG" id="ENOG502QS9N">
    <property type="taxonomic scope" value="Eukaryota"/>
</dbReference>
<dbReference type="GeneTree" id="ENSGT00940000162929"/>
<dbReference type="HOGENOM" id="CLU_042286_0_0_1"/>
<dbReference type="InParanoid" id="Q29RT0"/>
<dbReference type="OMA" id="SARDECP"/>
<dbReference type="OrthoDB" id="439808at2759"/>
<dbReference type="TreeFam" id="TF331833"/>
<dbReference type="Proteomes" id="UP000009136">
    <property type="component" value="Chromosome 15"/>
</dbReference>
<dbReference type="Bgee" id="ENSBTAG00000047652">
    <property type="expression patterns" value="Expressed in spermatocyte and 9 other cell types or tissues"/>
</dbReference>
<dbReference type="GO" id="GO:0071013">
    <property type="term" value="C:catalytic step 2 spliceosome"/>
    <property type="evidence" value="ECO:0000250"/>
    <property type="project" value="UniProtKB"/>
</dbReference>
<dbReference type="GO" id="GO:0000791">
    <property type="term" value="C:euchromatin"/>
    <property type="evidence" value="ECO:0000250"/>
    <property type="project" value="UniProtKB"/>
</dbReference>
<dbReference type="GO" id="GO:0070062">
    <property type="term" value="C:extracellular exosome"/>
    <property type="evidence" value="ECO:0000250"/>
    <property type="project" value="UniProtKB"/>
</dbReference>
<dbReference type="GO" id="GO:0005634">
    <property type="term" value="C:nucleus"/>
    <property type="evidence" value="ECO:0000250"/>
    <property type="project" value="UniProtKB"/>
</dbReference>
<dbReference type="GO" id="GO:0005681">
    <property type="term" value="C:spliceosomal complex"/>
    <property type="evidence" value="ECO:0000318"/>
    <property type="project" value="GO_Central"/>
</dbReference>
<dbReference type="GO" id="GO:0044530">
    <property type="term" value="C:supraspliceosomal complex"/>
    <property type="evidence" value="ECO:0000250"/>
    <property type="project" value="UniProtKB"/>
</dbReference>
<dbReference type="GO" id="GO:0003682">
    <property type="term" value="F:chromatin binding"/>
    <property type="evidence" value="ECO:0000250"/>
    <property type="project" value="UniProtKB"/>
</dbReference>
<dbReference type="GO" id="GO:0003729">
    <property type="term" value="F:mRNA binding"/>
    <property type="evidence" value="ECO:0000250"/>
    <property type="project" value="UniProtKB"/>
</dbReference>
<dbReference type="GO" id="GO:0003723">
    <property type="term" value="F:RNA binding"/>
    <property type="evidence" value="ECO:0000250"/>
    <property type="project" value="UniProtKB"/>
</dbReference>
<dbReference type="GO" id="GO:0000978">
    <property type="term" value="F:RNA polymerase II cis-regulatory region sequence-specific DNA binding"/>
    <property type="evidence" value="ECO:0000250"/>
    <property type="project" value="UniProtKB"/>
</dbReference>
<dbReference type="GO" id="GO:0071347">
    <property type="term" value="P:cellular response to interleukin-1"/>
    <property type="evidence" value="ECO:0000250"/>
    <property type="project" value="UniProtKB"/>
</dbReference>
<dbReference type="GO" id="GO:0006509">
    <property type="term" value="P:membrane protein ectodomain proteolysis"/>
    <property type="evidence" value="ECO:0000250"/>
    <property type="project" value="UniProtKB"/>
</dbReference>
<dbReference type="GO" id="GO:0006397">
    <property type="term" value="P:mRNA processing"/>
    <property type="evidence" value="ECO:0007669"/>
    <property type="project" value="UniProtKB-KW"/>
</dbReference>
<dbReference type="GO" id="GO:0048025">
    <property type="term" value="P:negative regulation of mRNA splicing, via spliceosome"/>
    <property type="evidence" value="ECO:0000250"/>
    <property type="project" value="UniProtKB"/>
</dbReference>
<dbReference type="GO" id="GO:0048026">
    <property type="term" value="P:positive regulation of mRNA splicing, via spliceosome"/>
    <property type="evidence" value="ECO:0000250"/>
    <property type="project" value="UniProtKB"/>
</dbReference>
<dbReference type="GO" id="GO:0045944">
    <property type="term" value="P:positive regulation of transcription by RNA polymerase II"/>
    <property type="evidence" value="ECO:0000250"/>
    <property type="project" value="UniProtKB"/>
</dbReference>
<dbReference type="GO" id="GO:0051260">
    <property type="term" value="P:protein homooligomerization"/>
    <property type="evidence" value="ECO:0000250"/>
    <property type="project" value="UniProtKB"/>
</dbReference>
<dbReference type="GO" id="GO:0000381">
    <property type="term" value="P:regulation of alternative mRNA splicing, via spliceosome"/>
    <property type="evidence" value="ECO:0000250"/>
    <property type="project" value="UniProtKB"/>
</dbReference>
<dbReference type="GO" id="GO:0008380">
    <property type="term" value="P:RNA splicing"/>
    <property type="evidence" value="ECO:0007669"/>
    <property type="project" value="UniProtKB-KW"/>
</dbReference>
<dbReference type="GO" id="GO:0006366">
    <property type="term" value="P:transcription by RNA polymerase II"/>
    <property type="evidence" value="ECO:0000250"/>
    <property type="project" value="UniProtKB"/>
</dbReference>
<dbReference type="CDD" id="cd12382">
    <property type="entry name" value="RRM_RBMX_like"/>
    <property type="match status" value="1"/>
</dbReference>
<dbReference type="FunFam" id="3.30.70.330:FF:000119">
    <property type="entry name" value="RNA-binding motif protein, X chromosome"/>
    <property type="match status" value="1"/>
</dbReference>
<dbReference type="Gene3D" id="3.30.70.330">
    <property type="match status" value="1"/>
</dbReference>
<dbReference type="InterPro" id="IPR012677">
    <property type="entry name" value="Nucleotide-bd_a/b_plait_sf"/>
</dbReference>
<dbReference type="InterPro" id="IPR035979">
    <property type="entry name" value="RBD_domain_sf"/>
</dbReference>
<dbReference type="InterPro" id="IPR050441">
    <property type="entry name" value="RBM"/>
</dbReference>
<dbReference type="InterPro" id="IPR012604">
    <property type="entry name" value="RBM1CTR"/>
</dbReference>
<dbReference type="InterPro" id="IPR000504">
    <property type="entry name" value="RRM_dom"/>
</dbReference>
<dbReference type="InterPro" id="IPR003954">
    <property type="entry name" value="RRM_dom_euk"/>
</dbReference>
<dbReference type="PANTHER" id="PTHR48034">
    <property type="entry name" value="TRANSFORMER-2 SEX-DETERMINING PROTEIN-RELATED"/>
    <property type="match status" value="1"/>
</dbReference>
<dbReference type="Pfam" id="PF08081">
    <property type="entry name" value="RBM1CTR"/>
    <property type="match status" value="1"/>
</dbReference>
<dbReference type="Pfam" id="PF00076">
    <property type="entry name" value="RRM_1"/>
    <property type="match status" value="1"/>
</dbReference>
<dbReference type="SMART" id="SM00360">
    <property type="entry name" value="RRM"/>
    <property type="match status" value="1"/>
</dbReference>
<dbReference type="SMART" id="SM00361">
    <property type="entry name" value="RRM_1"/>
    <property type="match status" value="1"/>
</dbReference>
<dbReference type="SUPFAM" id="SSF54928">
    <property type="entry name" value="RNA-binding domain, RBD"/>
    <property type="match status" value="1"/>
</dbReference>
<dbReference type="PROSITE" id="PS50102">
    <property type="entry name" value="RRM"/>
    <property type="match status" value="1"/>
</dbReference>
<organism>
    <name type="scientific">Bos taurus</name>
    <name type="common">Bovine</name>
    <dbReference type="NCBI Taxonomy" id="9913"/>
    <lineage>
        <taxon>Eukaryota</taxon>
        <taxon>Metazoa</taxon>
        <taxon>Chordata</taxon>
        <taxon>Craniata</taxon>
        <taxon>Vertebrata</taxon>
        <taxon>Euteleostomi</taxon>
        <taxon>Mammalia</taxon>
        <taxon>Eutheria</taxon>
        <taxon>Laurasiatheria</taxon>
        <taxon>Artiodactyla</taxon>
        <taxon>Ruminantia</taxon>
        <taxon>Pecora</taxon>
        <taxon>Bovidae</taxon>
        <taxon>Bovinae</taxon>
        <taxon>Bos</taxon>
    </lineage>
</organism>
<protein>
    <recommendedName>
        <fullName>RNA-binding motif protein, X chromosome</fullName>
    </recommendedName>
    <alternativeName>
        <fullName>Heterogeneous nuclear ribonucleoprotein G</fullName>
        <shortName>hnRNP G</shortName>
    </alternativeName>
    <component>
        <recommendedName>
            <fullName>RNA-binding motif protein, X chromosome, N-terminally processed</fullName>
        </recommendedName>
    </component>
</protein>
<name>RBMX_BOVIN</name>
<evidence type="ECO:0000250" key="1"/>
<evidence type="ECO:0000250" key="2">
    <source>
        <dbReference type="UniProtKB" id="P38159"/>
    </source>
</evidence>
<evidence type="ECO:0000250" key="3">
    <source>
        <dbReference type="UniProtKB" id="Q9WV02"/>
    </source>
</evidence>
<evidence type="ECO:0000255" key="4">
    <source>
        <dbReference type="PROSITE-ProRule" id="PRU00176"/>
    </source>
</evidence>
<evidence type="ECO:0000256" key="5">
    <source>
        <dbReference type="SAM" id="MobiDB-lite"/>
    </source>
</evidence>
<sequence>MVEADRPGKLFIGGLNLETDEKSLEATFGKYGRISEVLLMKDRETNKSRGFAFITFESPADAKAAVRDMNGKSLDGKAIKVAQATKPAFESGRRGPPLSRSRGRSRGLRGARGGGPRRPPSRGGPADDGGYAGDFDLRPSRAPLPMKRGPPPPRRAGPPPKRAAPSGPARSGSGGGMRGRAPAARGRDGYEGPPRRDPPPPRRDPYLGSREGGYSPRDGYSSRDYSSARDARDFAPSPREYTYRDYGHSSARDECPSRGYGDRDGYGGRDRDYADHPSGGSYRDPFESYGDPRSAAPARGPPPSYGGGGGRYEEYRGCSPDAYGGGRDGYAGGRSERYSGGRDRVGRADRGLPQSVERGCPPPRESYSRSGRKVPRGGGRLGSRSERGGGGGRSRY</sequence>
<keyword id="KW-0007">Acetylation</keyword>
<keyword id="KW-0010">Activator</keyword>
<keyword id="KW-0325">Glycoprotein</keyword>
<keyword id="KW-1017">Isopeptide bond</keyword>
<keyword id="KW-0488">Methylation</keyword>
<keyword id="KW-0507">mRNA processing</keyword>
<keyword id="KW-0508">mRNA splicing</keyword>
<keyword id="KW-0539">Nucleus</keyword>
<keyword id="KW-0597">Phosphoprotein</keyword>
<keyword id="KW-1185">Reference proteome</keyword>
<keyword id="KW-0678">Repressor</keyword>
<keyword id="KW-0687">Ribonucleoprotein</keyword>
<keyword id="KW-0694">RNA-binding</keyword>
<keyword id="KW-0747">Spliceosome</keyword>
<keyword id="KW-0804">Transcription</keyword>
<keyword id="KW-0043">Tumor suppressor</keyword>
<keyword id="KW-0832">Ubl conjugation</keyword>
<proteinExistence type="evidence at transcript level"/>
<reference key="1">
    <citation type="submission" date="2006-02" db="EMBL/GenBank/DDBJ databases">
        <authorList>
            <consortium name="NIH - Mammalian Gene Collection (MGC) project"/>
        </authorList>
    </citation>
    <scope>NUCLEOTIDE SEQUENCE [LARGE SCALE MRNA]</scope>
    <source>
        <strain>Hereford</strain>
        <tissue>Testis</tissue>
    </source>
</reference>
<feature type="chain" id="PRO_0000240607" description="RNA-binding motif protein, X chromosome">
    <location>
        <begin position="1"/>
        <end position="396"/>
    </location>
</feature>
<feature type="initiator methionine" description="Removed; alternate" evidence="2">
    <location>
        <position position="1"/>
    </location>
</feature>
<feature type="chain" id="PRO_0000367118" description="RNA-binding motif protein, X chromosome, N-terminally processed">
    <location>
        <begin position="2"/>
        <end position="396"/>
    </location>
</feature>
<feature type="domain" description="RRM" evidence="4">
    <location>
        <begin position="8"/>
        <end position="86"/>
    </location>
</feature>
<feature type="region of interest" description="Disordered" evidence="5">
    <location>
        <begin position="84"/>
        <end position="396"/>
    </location>
</feature>
<feature type="region of interest" description="Necessary for the association to nascent RNAPII transcripts and nuclear localization" evidence="1">
    <location>
        <begin position="186"/>
        <end position="236"/>
    </location>
</feature>
<feature type="region of interest" description="Necessary for RNA-binding" evidence="1">
    <location>
        <begin position="336"/>
        <end position="396"/>
    </location>
</feature>
<feature type="compositionally biased region" description="Pro residues" evidence="5">
    <location>
        <begin position="148"/>
        <end position="162"/>
    </location>
</feature>
<feature type="compositionally biased region" description="Basic and acidic residues" evidence="5">
    <location>
        <begin position="185"/>
        <end position="205"/>
    </location>
</feature>
<feature type="compositionally biased region" description="Basic and acidic residues" evidence="5">
    <location>
        <begin position="241"/>
        <end position="275"/>
    </location>
</feature>
<feature type="compositionally biased region" description="Gly residues" evidence="5">
    <location>
        <begin position="323"/>
        <end position="332"/>
    </location>
</feature>
<feature type="compositionally biased region" description="Basic and acidic residues" evidence="5">
    <location>
        <begin position="334"/>
        <end position="350"/>
    </location>
</feature>
<feature type="modified residue" description="N-acetylmethionine; in Heterogeneous nuclear ribonucleoprotein G; alternate" evidence="2">
    <location>
        <position position="1"/>
    </location>
</feature>
<feature type="modified residue" description="N-acetylvaline; in Heterogeneous nuclear ribonucleoprotein G, N-terminally processed" evidence="2">
    <location>
        <position position="2"/>
    </location>
</feature>
<feature type="modified residue" description="N6-acetyllysine" evidence="2">
    <location>
        <position position="30"/>
    </location>
</feature>
<feature type="modified residue" description="Phosphoserine" evidence="2">
    <location>
        <position position="91"/>
    </location>
</feature>
<feature type="modified residue" description="Omega-N-methylarginine" evidence="3">
    <location>
        <position position="122"/>
    </location>
</feature>
<feature type="modified residue" description="Omega-N-methylarginine" evidence="3">
    <location>
        <position position="141"/>
    </location>
</feature>
<feature type="modified residue" description="Omega-N-methylarginine" evidence="3">
    <location>
        <position position="162"/>
    </location>
</feature>
<feature type="modified residue" description="Omega-N-methylarginine" evidence="3">
    <location>
        <position position="170"/>
    </location>
</feature>
<feature type="modified residue" description="Phosphoserine" evidence="2">
    <location>
        <position position="335"/>
    </location>
</feature>
<feature type="modified residue" description="Phosphoserine" evidence="2">
    <location>
        <position position="355"/>
    </location>
</feature>
<feature type="cross-link" description="Glycyl lysine isopeptide (Lys-Gly) (interchain with G-Cter in SUMO2)" evidence="2">
    <location>
        <position position="22"/>
    </location>
</feature>
<feature type="cross-link" description="Glycyl lysine isopeptide (Lys-Gly) (interchain with G-Cter in SUMO2)" evidence="2">
    <location>
        <position position="80"/>
    </location>
</feature>
<feature type="cross-link" description="Glycyl lysine isopeptide (Lys-Gly) (interchain with G-Cter in SUMO2)" evidence="2">
    <location>
        <position position="86"/>
    </location>
</feature>